<feature type="signal peptide" evidence="6">
    <location>
        <begin position="1"/>
        <end position="27"/>
    </location>
</feature>
<feature type="chain" id="PRO_0000045748" description="Cellulose 1,4-beta-cellobiosidase">
    <location>
        <begin position="28"/>
        <end position="895"/>
    </location>
</feature>
<feature type="domain" description="CBM-cenC">
    <location>
        <begin position="40"/>
        <end position="199"/>
    </location>
</feature>
<feature type="domain" description="Dockerin" evidence="1">
    <location>
        <begin position="828"/>
        <end position="894"/>
    </location>
</feature>
<feature type="region of interest" description="Linker">
    <location>
        <begin position="199"/>
        <end position="240"/>
    </location>
</feature>
<feature type="region of interest" description="Catalytic">
    <location>
        <begin position="241"/>
        <end position="815"/>
    </location>
</feature>
<feature type="active site" description="Nucleophile" evidence="4">
    <location>
        <position position="386"/>
    </location>
</feature>
<feature type="active site" evidence="2">
    <location>
        <position position="737"/>
    </location>
</feature>
<feature type="active site" evidence="3">
    <location>
        <position position="786"/>
    </location>
</feature>
<feature type="active site" evidence="3">
    <location>
        <position position="795"/>
    </location>
</feature>
<feature type="strand" evidence="8">
    <location>
        <begin position="33"/>
        <end position="35"/>
    </location>
</feature>
<feature type="helix" evidence="8">
    <location>
        <begin position="38"/>
        <end position="40"/>
    </location>
</feature>
<feature type="strand" evidence="8">
    <location>
        <begin position="57"/>
        <end position="60"/>
    </location>
</feature>
<feature type="strand" evidence="8">
    <location>
        <begin position="64"/>
        <end position="72"/>
    </location>
</feature>
<feature type="strand" evidence="8">
    <location>
        <begin position="80"/>
        <end position="89"/>
    </location>
</feature>
<feature type="helix" evidence="8">
    <location>
        <begin position="93"/>
        <end position="95"/>
    </location>
</feature>
<feature type="strand" evidence="8">
    <location>
        <begin position="96"/>
        <end position="105"/>
    </location>
</feature>
<feature type="strand" evidence="8">
    <location>
        <begin position="110"/>
        <end position="121"/>
    </location>
</feature>
<feature type="strand" evidence="8">
    <location>
        <begin position="123"/>
        <end position="133"/>
    </location>
</feature>
<feature type="strand" evidence="8">
    <location>
        <begin position="138"/>
        <end position="142"/>
    </location>
</feature>
<feature type="strand" evidence="8">
    <location>
        <begin position="147"/>
        <end position="150"/>
    </location>
</feature>
<feature type="strand" evidence="8">
    <location>
        <begin position="153"/>
        <end position="162"/>
    </location>
</feature>
<feature type="strand" evidence="8">
    <location>
        <begin position="168"/>
        <end position="176"/>
    </location>
</feature>
<feature type="helix" evidence="8">
    <location>
        <begin position="179"/>
        <end position="181"/>
    </location>
</feature>
<feature type="strand" evidence="8">
    <location>
        <begin position="184"/>
        <end position="197"/>
    </location>
</feature>
<evidence type="ECO:0000255" key="1">
    <source>
        <dbReference type="PROSITE-ProRule" id="PRU01102"/>
    </source>
</evidence>
<evidence type="ECO:0000255" key="2">
    <source>
        <dbReference type="PROSITE-ProRule" id="PRU10059"/>
    </source>
</evidence>
<evidence type="ECO:0000255" key="3">
    <source>
        <dbReference type="PROSITE-ProRule" id="PRU10060"/>
    </source>
</evidence>
<evidence type="ECO:0000255" key="4">
    <source>
        <dbReference type="PROSITE-ProRule" id="PRU10140"/>
    </source>
</evidence>
<evidence type="ECO:0000269" key="5">
    <source>
    </source>
</evidence>
<evidence type="ECO:0000269" key="6">
    <source>
    </source>
</evidence>
<evidence type="ECO:0000305" key="7"/>
<evidence type="ECO:0007829" key="8">
    <source>
        <dbReference type="PDB" id="3P6B"/>
    </source>
</evidence>
<organism>
    <name type="scientific">Acetivibrio thermocellus</name>
    <name type="common">Hungateiclostridium thermocellum</name>
    <name type="synonym">Clostridium thermocellum</name>
    <dbReference type="NCBI Taxonomy" id="1515"/>
    <lineage>
        <taxon>Bacteria</taxon>
        <taxon>Bacillati</taxon>
        <taxon>Bacillota</taxon>
        <taxon>Clostridia</taxon>
        <taxon>Eubacteriales</taxon>
        <taxon>Oscillospiraceae</taxon>
        <taxon>Acetivibrio</taxon>
    </lineage>
</organism>
<gene>
    <name type="primary">celK</name>
</gene>
<accession>P0C2S1</accession>
<accession>O68438</accession>
<accession>Q10748</accession>
<accession>Q4CGG7</accession>
<reference key="1">
    <citation type="journal article" date="1999" name="J. Bacteriol.">
        <title>Cloning and sequence analysis of a new cellulase gene encoding CelK, a major cellulosome component of Clostridium thermocellum: evidence for gene duplication and recombination.</title>
        <authorList>
            <person name="Kataeva I."/>
            <person name="Li X.L."/>
            <person name="Chen H."/>
            <person name="Choi S.-K."/>
            <person name="Ljungdahl L.G."/>
        </authorList>
    </citation>
    <scope>NUCLEOTIDE SEQUENCE [GENOMIC DNA]</scope>
    <scope>PROTEIN SEQUENCE OF 283-287 AND 326-337</scope>
    <scope>CATALYTIC ACTIVITY</scope>
    <scope>ACTIVITY REGULATION</scope>
    <scope>BIOPHYSICOCHEMICAL PROPERTIES</scope>
    <scope>SUBCELLULAR LOCATION</scope>
    <source>
        <strain>JW20</strain>
    </source>
</reference>
<reference key="2">
    <citation type="journal article" date="1996" name="Biochemistry">
        <title>Dissociation of the cellulosome of Clostridium thermocellum in the presence of ethylenediaminetetraacetic acid occurs with the formation of trucated polypeptides.</title>
        <authorList>
            <person name="Choi S.K."/>
            <person name="Ljungdahl L.G."/>
        </authorList>
    </citation>
    <scope>PROTEIN SEQUENCE OF 28-45</scope>
    <scope>SUBCELLULAR LOCATION</scope>
    <source>
        <strain>JW20</strain>
    </source>
</reference>
<protein>
    <recommendedName>
        <fullName>Cellulose 1,4-beta-cellobiosidase</fullName>
        <ecNumber>3.2.1.91</ecNumber>
    </recommendedName>
</protein>
<name>CELK_ACETH</name>
<proteinExistence type="evidence at protein level"/>
<comment type="catalytic activity">
    <reaction evidence="5">
        <text>Hydrolysis of (1-&gt;4)-beta-D-glucosidic linkages in cellulose and cellotetraose, releasing cellobiose from the non-reducing ends of the chains.</text>
        <dbReference type="EC" id="3.2.1.91"/>
    </reaction>
</comment>
<comment type="activity regulation">
    <text evidence="5">Inhibited by cellobiose.</text>
</comment>
<comment type="biophysicochemical properties">
    <kinetics>
        <KM evidence="5">1.67 uM for PNP-cellobioside</KM>
        <Vmax evidence="5">15.1 umol/min/mg enzyme</Vmax>
    </kinetics>
    <phDependence>
        <text evidence="5">Optimum pH is 6.0.</text>
    </phDependence>
    <temperatureDependence>
        <text evidence="5">Retains 97% of original activity when incubated for 200 hours at 60 degrees Celsius.</text>
    </temperatureDependence>
</comment>
<comment type="subcellular location">
    <subcellularLocation>
        <location evidence="5 6">Secreted</location>
    </subcellularLocation>
</comment>
<comment type="similarity">
    <text evidence="4 7">Belongs to the glycosyl hydrolase 9 (cellulase E) family.</text>
</comment>
<sequence>MNFRRMLCAAIVLTIVLSIMLPSTVFALEDKSSKLPDYKNDLLYERTFDEGLCFPWHTCEDSGGKCDFAVVDVPGEPGNKAFRLTVIDKGQNKWSVQMRHRGITLEQGHTYTVRFTIWSDKSCRVYAKIGQMGEPYTEYWNNNWNPFNLTPGQKLTVEQNFTMNYPTDDTCEFTFHLGGELAAGTPYYVYLDDVSLYDPRFVKPVEYVLPQPDVRVNQVGYLPFAKKYATVVSSSTSPLKWQLLNSANQVVLEGNTIPKGLDKDSQDYVHWIDFSNFKTEGKGYYFKLPTVNSDTNYSHPFDISADIYSKMKFDALAFFYHKRSGIPIEMPYAGGEQWTRPAGHIGIEPNKGDTNVPTWPQDDEYAGRPQKYYTKDVTGGWYDAGDHGKYVVNGGIAVWTLMNMYERAKIRGIANQGAYKDGGMNIPERNNGYPDILDEARWEIEFFKKMQVTEKEDPSIAGMVHHKIHDFRWTALGMLPHEDPQPRYLRPVSTAATLNFAATLAQSARLWKDYDPTFAADCLEKAEIAWQAALKHPDIYAEYTPGSGGPGGGPYNDDYVGDEFYWAACELYVTTGKDEYKNYLMNSPHYLEMPAKMGENGGANGEDNGLWGCFTWGTTQGLGTITLALVENGLPATDIQKARNNIAKAADRWLENIEEQGYRLPIKQAEDERGGYPWGSNSFILNQMIVMGYAYDFTGNSKYLDGMQDGMSYLLGRNGLDQSYVTGYGERPLQNPHDRFWTPQTSKKFPAPPPGIIAGGPNSRFEDPTITAAVKKDTPPQKCYIDHTDSWSTNEITVNWNAPFAWVTAYLDEIDLITPPGGVDPEEPEVIYGDCNGDGKVNSTDAVALKRYILRSGISINTDNADVNADGRVNSTDLAILKRYILKEIDVLPHK</sequence>
<keyword id="KW-0002">3D-structure</keyword>
<keyword id="KW-0119">Carbohydrate metabolism</keyword>
<keyword id="KW-0136">Cellulose degradation</keyword>
<keyword id="KW-0903">Direct protein sequencing</keyword>
<keyword id="KW-0326">Glycosidase</keyword>
<keyword id="KW-0378">Hydrolase</keyword>
<keyword id="KW-0624">Polysaccharide degradation</keyword>
<keyword id="KW-0964">Secreted</keyword>
<keyword id="KW-0732">Signal</keyword>
<dbReference type="EC" id="3.2.1.91"/>
<dbReference type="EMBL" id="AF039030">
    <property type="protein sequence ID" value="AAC06139.1"/>
    <property type="molecule type" value="Genomic_DNA"/>
</dbReference>
<dbReference type="PDB" id="3P6B">
    <property type="method" value="X-ray"/>
    <property type="resolution" value="2.00 A"/>
    <property type="chains" value="A/B=27-210"/>
</dbReference>
<dbReference type="PDBsum" id="3P6B"/>
<dbReference type="SMR" id="P0C2S1"/>
<dbReference type="CAZy" id="CBM4">
    <property type="family name" value="Carbohydrate-Binding Module Family 4"/>
</dbReference>
<dbReference type="CAZy" id="GH9">
    <property type="family name" value="Glycoside Hydrolase Family 9"/>
</dbReference>
<dbReference type="SABIO-RK" id="P0C2S1"/>
<dbReference type="EvolutionaryTrace" id="P0C2S1"/>
<dbReference type="GO" id="GO:0005615">
    <property type="term" value="C:extracellular space"/>
    <property type="evidence" value="ECO:0000314"/>
    <property type="project" value="UniProtKB"/>
</dbReference>
<dbReference type="GO" id="GO:0008810">
    <property type="term" value="F:cellulase activity"/>
    <property type="evidence" value="ECO:0007669"/>
    <property type="project" value="InterPro"/>
</dbReference>
<dbReference type="GO" id="GO:0016162">
    <property type="term" value="F:cellulose 1,4-beta-cellobiosidase activity"/>
    <property type="evidence" value="ECO:0000314"/>
    <property type="project" value="UniProtKB"/>
</dbReference>
<dbReference type="GO" id="GO:0030245">
    <property type="term" value="P:cellulose catabolic process"/>
    <property type="evidence" value="ECO:0007669"/>
    <property type="project" value="UniProtKB-KW"/>
</dbReference>
<dbReference type="GO" id="GO:0000272">
    <property type="term" value="P:polysaccharide catabolic process"/>
    <property type="evidence" value="ECO:0000314"/>
    <property type="project" value="UniProtKB"/>
</dbReference>
<dbReference type="CDD" id="cd14256">
    <property type="entry name" value="Dockerin_I"/>
    <property type="match status" value="1"/>
</dbReference>
<dbReference type="CDD" id="cd02850">
    <property type="entry name" value="E_set_Cellulase_N"/>
    <property type="match status" value="1"/>
</dbReference>
<dbReference type="FunFam" id="1.10.1330.10:FF:000001">
    <property type="entry name" value="Endoglucanase D"/>
    <property type="match status" value="1"/>
</dbReference>
<dbReference type="FunFam" id="1.50.10.10:FF:000086">
    <property type="entry name" value="Glucanase"/>
    <property type="match status" value="1"/>
</dbReference>
<dbReference type="Gene3D" id="1.50.10.10">
    <property type="match status" value="1"/>
</dbReference>
<dbReference type="Gene3D" id="1.10.1330.10">
    <property type="entry name" value="Dockerin domain"/>
    <property type="match status" value="1"/>
</dbReference>
<dbReference type="Gene3D" id="2.60.120.260">
    <property type="entry name" value="Galactose-binding domain-like"/>
    <property type="match status" value="1"/>
</dbReference>
<dbReference type="Gene3D" id="2.60.40.10">
    <property type="entry name" value="Immunoglobulins"/>
    <property type="match status" value="1"/>
</dbReference>
<dbReference type="InterPro" id="IPR008928">
    <property type="entry name" value="6-hairpin_glycosidase_sf"/>
</dbReference>
<dbReference type="InterPro" id="IPR012341">
    <property type="entry name" value="6hp_glycosidase-like_sf"/>
</dbReference>
<dbReference type="InterPro" id="IPR004197">
    <property type="entry name" value="Cellulase_Ig-like"/>
</dbReference>
<dbReference type="InterPro" id="IPR003305">
    <property type="entry name" value="CenC_carb-bd"/>
</dbReference>
<dbReference type="InterPro" id="IPR002105">
    <property type="entry name" value="Dockerin_1_rpt"/>
</dbReference>
<dbReference type="InterPro" id="IPR016134">
    <property type="entry name" value="Dockerin_dom"/>
</dbReference>
<dbReference type="InterPro" id="IPR036439">
    <property type="entry name" value="Dockerin_dom_sf"/>
</dbReference>
<dbReference type="InterPro" id="IPR008979">
    <property type="entry name" value="Galactose-bd-like_sf"/>
</dbReference>
<dbReference type="InterPro" id="IPR001701">
    <property type="entry name" value="Glyco_hydro_9"/>
</dbReference>
<dbReference type="InterPro" id="IPR033126">
    <property type="entry name" value="Glyco_hydro_9_Asp/Glu_AS"/>
</dbReference>
<dbReference type="InterPro" id="IPR018221">
    <property type="entry name" value="Glyco_hydro_9_His_AS"/>
</dbReference>
<dbReference type="InterPro" id="IPR013783">
    <property type="entry name" value="Ig-like_fold"/>
</dbReference>
<dbReference type="InterPro" id="IPR014756">
    <property type="entry name" value="Ig_E-set"/>
</dbReference>
<dbReference type="PANTHER" id="PTHR22298">
    <property type="entry name" value="ENDO-1,4-BETA-GLUCANASE"/>
    <property type="match status" value="1"/>
</dbReference>
<dbReference type="Pfam" id="PF02018">
    <property type="entry name" value="CBM_4_9"/>
    <property type="match status" value="1"/>
</dbReference>
<dbReference type="Pfam" id="PF02927">
    <property type="entry name" value="CelD_N"/>
    <property type="match status" value="1"/>
</dbReference>
<dbReference type="Pfam" id="PF00404">
    <property type="entry name" value="Dockerin_1"/>
    <property type="match status" value="1"/>
</dbReference>
<dbReference type="Pfam" id="PF00759">
    <property type="entry name" value="Glyco_hydro_9"/>
    <property type="match status" value="1"/>
</dbReference>
<dbReference type="SUPFAM" id="SSF81296">
    <property type="entry name" value="E set domains"/>
    <property type="match status" value="1"/>
</dbReference>
<dbReference type="SUPFAM" id="SSF49785">
    <property type="entry name" value="Galactose-binding domain-like"/>
    <property type="match status" value="1"/>
</dbReference>
<dbReference type="SUPFAM" id="SSF48208">
    <property type="entry name" value="Six-hairpin glycosidases"/>
    <property type="match status" value="1"/>
</dbReference>
<dbReference type="SUPFAM" id="SSF63446">
    <property type="entry name" value="Type I dockerin domain"/>
    <property type="match status" value="1"/>
</dbReference>
<dbReference type="PROSITE" id="PS00448">
    <property type="entry name" value="CLOS_CELLULOSOME_RPT"/>
    <property type="match status" value="1"/>
</dbReference>
<dbReference type="PROSITE" id="PS51766">
    <property type="entry name" value="DOCKERIN"/>
    <property type="match status" value="1"/>
</dbReference>
<dbReference type="PROSITE" id="PS60032">
    <property type="entry name" value="GH9_1"/>
    <property type="match status" value="1"/>
</dbReference>
<dbReference type="PROSITE" id="PS00592">
    <property type="entry name" value="GH9_2"/>
    <property type="match status" value="1"/>
</dbReference>
<dbReference type="PROSITE" id="PS00698">
    <property type="entry name" value="GH9_3"/>
    <property type="match status" value="1"/>
</dbReference>